<keyword id="KW-0131">Cell cycle</keyword>
<keyword id="KW-0132">Cell division</keyword>
<keyword id="KW-0965">Cell junction</keyword>
<keyword id="KW-0963">Cytoplasm</keyword>
<keyword id="KW-0217">Developmental protein</keyword>
<keyword id="KW-0539">Nucleus</keyword>
<keyword id="KW-0653">Protein transport</keyword>
<keyword id="KW-1185">Reference proteome</keyword>
<keyword id="KW-0813">Transport</keyword>
<keyword id="KW-0879">Wnt signaling pathway</keyword>
<sequence length="1171" mass="130298">MSSSSSDENETTIHSSSNPGSSGIYSQLKAGSSKRPSVRHDVSDAEDDEEPYEGFRKDMNMEVDERITTLLSSLHFEHKRDVVTADEDDNKLRELHENIFSLITTEPDFHRRRRLKKALPASNCIREQVYYLRRKPITPPDSYYHRLNAALHTIVKESFGEEYRKVATVLGLVEALAEVLILEVHAFGIPETNAVEHRNIRKLIANALTNLTYGQILSKRRLCSYDGFIRCVVRIIIESPNITQVYAGLIRNLSWNADSGMSEALQPTVHALSLAAVYAHTHRFDVTAILSALWNLAGHSVENKRTICETPNCLKVLANILSPDARFTTLVDSASGILKYVSQYLATNSSHLELRSLLITRMLTLLKSSSFTCVTNTLGAIAHLIAKDPHMQQLIRQDAAAVQQLNVLRNSNREDIRKAVKEVLNTLNQPCSHRYGDMSHSVGGASGMLSEPQLQMQTSHHGYHGTASPRLLSLRATRASPGKYIHPSQQQHMQVPAPDQRSSSLPRHFAVQRNGFMMAQSFNQQMDPHQQQQQQQQQMIFQMQQQQMMIQTDDQQMRYLNQQQQQQQQQHYQQQIQRNQNVEPVLPVDDDLDIPTSTVMGTRSNSERSLGSMNPGSVMTTGGWNSTLDTAANSSRALSPVSFSDIPASPTMCAQVFNLPVHPEDNQMTTPPNHPSTQNTTHYSSGSANTMTRSDGTTVPIDNLITPTYATLNVTNNAARKTSEDLESPDDILPGPSLEVEEEGDYAIITGAEQKSDDDLLTRSIQEEMPTSSSTPKLKVSPRLNGFFSPSQKTTSSPAWSHPDTSPILKQTQRPKHHEMTTDSDRLLMESIMSEMPRSRVISPRLASGGQQYLDPEPDRSSHSKNEEADRRDAIIASHEPSDQGMNVGRGSSPQQQQLHRMESLESQASSEDSFGLNGYQEEHNTSSSAAHTMRIDKDDVVDASLPMDCVDDEDYDYTDDHFDDNYEEDYEDSNATQFDEGIDPQLTIDCSMISSGSGSSLQKAETTAGSRDSGALATSTPIGSVSSLPGVRRAKKVSINGKTRLPVPKTNGSLVDRVRKPVIEASRPRLPPKPSLLKGKQYHEEDLIENQTRDDTIYVNAPIVEAEQERIYMNALKHSQGSPSVNGTPPKSAIVSPYNYQKPPFTERSNGEINEKNVTPNPKQMLVTIV</sequence>
<name>APR1_CAEBR</name>
<gene>
    <name evidence="4" type="primary">apr-1</name>
    <name type="ORF">CBG08224</name>
</gene>
<organism>
    <name type="scientific">Caenorhabditis briggsae</name>
    <dbReference type="NCBI Taxonomy" id="6238"/>
    <lineage>
        <taxon>Eukaryota</taxon>
        <taxon>Metazoa</taxon>
        <taxon>Ecdysozoa</taxon>
        <taxon>Nematoda</taxon>
        <taxon>Chromadorea</taxon>
        <taxon>Rhabditida</taxon>
        <taxon>Rhabditina</taxon>
        <taxon>Rhabditomorpha</taxon>
        <taxon>Rhabditoidea</taxon>
        <taxon>Rhabditidae</taxon>
        <taxon>Peloderinae</taxon>
        <taxon>Caenorhabditis</taxon>
    </lineage>
</organism>
<feature type="chain" id="PRO_0000347279" description="APC-related protein 1">
    <location>
        <begin position="1"/>
        <end position="1171"/>
    </location>
</feature>
<feature type="repeat" description="ARM" evidence="2">
    <location>
        <begin position="312"/>
        <end position="356"/>
    </location>
</feature>
<feature type="region of interest" description="Required for interaction with bar-1 and hmp-2" evidence="1">
    <location>
        <begin position="1"/>
        <end position="481"/>
    </location>
</feature>
<feature type="region of interest" description="Disordered" evidence="3">
    <location>
        <begin position="1"/>
        <end position="54"/>
    </location>
</feature>
<feature type="region of interest" description="Disordered" evidence="3">
    <location>
        <begin position="587"/>
        <end position="617"/>
    </location>
</feature>
<feature type="region of interest" description="Required for interaction with pry-1" evidence="1">
    <location>
        <begin position="591"/>
        <end position="1171"/>
    </location>
</feature>
<feature type="region of interest" description="Disordered" evidence="3">
    <location>
        <begin position="662"/>
        <end position="699"/>
    </location>
</feature>
<feature type="region of interest" description="Disordered" evidence="3">
    <location>
        <begin position="720"/>
        <end position="741"/>
    </location>
</feature>
<feature type="region of interest" description="Disordered" evidence="3">
    <location>
        <begin position="767"/>
        <end position="822"/>
    </location>
</feature>
<feature type="region of interest" description="Disordered" evidence="3">
    <location>
        <begin position="837"/>
        <end position="936"/>
    </location>
</feature>
<feature type="region of interest" description="Disordered" evidence="3">
    <location>
        <begin position="995"/>
        <end position="1030"/>
    </location>
</feature>
<feature type="compositionally biased region" description="Low complexity" evidence="3">
    <location>
        <begin position="15"/>
        <end position="26"/>
    </location>
</feature>
<feature type="compositionally biased region" description="Polar residues" evidence="3">
    <location>
        <begin position="595"/>
        <end position="617"/>
    </location>
</feature>
<feature type="compositionally biased region" description="Polar residues" evidence="3">
    <location>
        <begin position="666"/>
        <end position="697"/>
    </location>
</feature>
<feature type="compositionally biased region" description="Polar residues" evidence="3">
    <location>
        <begin position="788"/>
        <end position="799"/>
    </location>
</feature>
<feature type="compositionally biased region" description="Basic and acidic residues" evidence="3">
    <location>
        <begin position="857"/>
        <end position="874"/>
    </location>
</feature>
<feature type="compositionally biased region" description="Polar residues" evidence="3">
    <location>
        <begin position="890"/>
        <end position="913"/>
    </location>
</feature>
<feature type="compositionally biased region" description="Polar residues" evidence="3">
    <location>
        <begin position="1002"/>
        <end position="1028"/>
    </location>
</feature>
<protein>
    <recommendedName>
        <fullName evidence="1">APC-related protein 1</fullName>
    </recommendedName>
</protein>
<reference evidence="4" key="1">
    <citation type="journal article" date="2003" name="PLoS Biol.">
        <title>The genome sequence of Caenorhabditis briggsae: a platform for comparative genomics.</title>
        <authorList>
            <person name="Stein L.D."/>
            <person name="Bao Z."/>
            <person name="Blasiar D."/>
            <person name="Blumenthal T."/>
            <person name="Brent M.R."/>
            <person name="Chen N."/>
            <person name="Chinwalla A."/>
            <person name="Clarke L."/>
            <person name="Clee C."/>
            <person name="Coghlan A."/>
            <person name="Coulson A."/>
            <person name="D'Eustachio P."/>
            <person name="Fitch D.H.A."/>
            <person name="Fulton L.A."/>
            <person name="Fulton R.E."/>
            <person name="Griffiths-Jones S."/>
            <person name="Harris T.W."/>
            <person name="Hillier L.W."/>
            <person name="Kamath R."/>
            <person name="Kuwabara P.E."/>
            <person name="Mardis E.R."/>
            <person name="Marra M.A."/>
            <person name="Miner T.L."/>
            <person name="Minx P."/>
            <person name="Mullikin J.C."/>
            <person name="Plumb R.W."/>
            <person name="Rogers J."/>
            <person name="Schein J.E."/>
            <person name="Sohrmann M."/>
            <person name="Spieth J."/>
            <person name="Stajich J.E."/>
            <person name="Wei C."/>
            <person name="Willey D."/>
            <person name="Wilson R.K."/>
            <person name="Durbin R.M."/>
            <person name="Waterston R.H."/>
        </authorList>
    </citation>
    <scope>NUCLEOTIDE SEQUENCE [LARGE SCALE GENOMIC DNA]</scope>
    <source>
        <strain evidence="4">AF16</strain>
    </source>
</reference>
<evidence type="ECO:0000250" key="1">
    <source>
        <dbReference type="UniProtKB" id="Q21227"/>
    </source>
</evidence>
<evidence type="ECO:0000255" key="2"/>
<evidence type="ECO:0000256" key="3">
    <source>
        <dbReference type="SAM" id="MobiDB-lite"/>
    </source>
</evidence>
<evidence type="ECO:0000312" key="4">
    <source>
        <dbReference type="EMBL" id="CAP28094.1"/>
    </source>
</evidence>
<dbReference type="EMBL" id="HE601064">
    <property type="protein sequence ID" value="CAP28094.1"/>
    <property type="molecule type" value="Genomic_DNA"/>
</dbReference>
<dbReference type="SMR" id="A8X633"/>
<dbReference type="FunCoup" id="A8X633">
    <property type="interactions" value="128"/>
</dbReference>
<dbReference type="STRING" id="6238.A8X633"/>
<dbReference type="KEGG" id="cbr:CBG_08224"/>
<dbReference type="CTD" id="8581894"/>
<dbReference type="WormBase" id="CBG08224a">
    <property type="protein sequence ID" value="CBP45043"/>
    <property type="gene ID" value="WBGene00030061"/>
    <property type="gene designation" value="Cbr-apr-1"/>
</dbReference>
<dbReference type="eggNOG" id="KOG2122">
    <property type="taxonomic scope" value="Eukaryota"/>
</dbReference>
<dbReference type="HOGENOM" id="CLU_272401_0_0_1"/>
<dbReference type="InParanoid" id="A8X633"/>
<dbReference type="OMA" id="CVDDEDY"/>
<dbReference type="Proteomes" id="UP000008549">
    <property type="component" value="Unassembled WGS sequence"/>
</dbReference>
<dbReference type="GO" id="GO:0005912">
    <property type="term" value="C:adherens junction"/>
    <property type="evidence" value="ECO:0000250"/>
    <property type="project" value="UniProtKB"/>
</dbReference>
<dbReference type="GO" id="GO:0030877">
    <property type="term" value="C:beta-catenin destruction complex"/>
    <property type="evidence" value="ECO:0000318"/>
    <property type="project" value="GO_Central"/>
</dbReference>
<dbReference type="GO" id="GO:0016342">
    <property type="term" value="C:catenin complex"/>
    <property type="evidence" value="ECO:0000318"/>
    <property type="project" value="GO_Central"/>
</dbReference>
<dbReference type="GO" id="GO:0005938">
    <property type="term" value="C:cell cortex"/>
    <property type="evidence" value="ECO:0000250"/>
    <property type="project" value="UniProtKB"/>
</dbReference>
<dbReference type="GO" id="GO:0005737">
    <property type="term" value="C:cytoplasm"/>
    <property type="evidence" value="ECO:0000250"/>
    <property type="project" value="UniProtKB"/>
</dbReference>
<dbReference type="GO" id="GO:0005634">
    <property type="term" value="C:nucleus"/>
    <property type="evidence" value="ECO:0007669"/>
    <property type="project" value="UniProtKB-SubCell"/>
</dbReference>
<dbReference type="GO" id="GO:0008013">
    <property type="term" value="F:beta-catenin binding"/>
    <property type="evidence" value="ECO:0000318"/>
    <property type="project" value="GO_Central"/>
</dbReference>
<dbReference type="GO" id="GO:0045295">
    <property type="term" value="F:gamma-catenin binding"/>
    <property type="evidence" value="ECO:0000318"/>
    <property type="project" value="GO_Central"/>
</dbReference>
<dbReference type="GO" id="GO:0008017">
    <property type="term" value="F:microtubule binding"/>
    <property type="evidence" value="ECO:0000318"/>
    <property type="project" value="GO_Central"/>
</dbReference>
<dbReference type="GO" id="GO:0008356">
    <property type="term" value="P:asymmetric cell division"/>
    <property type="evidence" value="ECO:0000250"/>
    <property type="project" value="UniProtKB"/>
</dbReference>
<dbReference type="GO" id="GO:0001708">
    <property type="term" value="P:cell fate specification"/>
    <property type="evidence" value="ECO:0000318"/>
    <property type="project" value="GO_Central"/>
</dbReference>
<dbReference type="GO" id="GO:0016477">
    <property type="term" value="P:cell migration"/>
    <property type="evidence" value="ECO:0000318"/>
    <property type="project" value="GO_Central"/>
</dbReference>
<dbReference type="GO" id="GO:0048598">
    <property type="term" value="P:embryonic morphogenesis"/>
    <property type="evidence" value="ECO:0000250"/>
    <property type="project" value="UniProtKB"/>
</dbReference>
<dbReference type="GO" id="GO:0007492">
    <property type="term" value="P:endoderm development"/>
    <property type="evidence" value="ECO:0000250"/>
    <property type="project" value="UniProtKB"/>
</dbReference>
<dbReference type="GO" id="GO:0090090">
    <property type="term" value="P:negative regulation of canonical Wnt signaling pathway"/>
    <property type="evidence" value="ECO:0000318"/>
    <property type="project" value="GO_Central"/>
</dbReference>
<dbReference type="GO" id="GO:0007026">
    <property type="term" value="P:negative regulation of microtubule depolymerization"/>
    <property type="evidence" value="ECO:0000318"/>
    <property type="project" value="GO_Central"/>
</dbReference>
<dbReference type="GO" id="GO:0030178">
    <property type="term" value="P:negative regulation of Wnt signaling pathway"/>
    <property type="evidence" value="ECO:0000250"/>
    <property type="project" value="UniProtKB"/>
</dbReference>
<dbReference type="GO" id="GO:0007399">
    <property type="term" value="P:nervous system development"/>
    <property type="evidence" value="ECO:0000318"/>
    <property type="project" value="GO_Central"/>
</dbReference>
<dbReference type="GO" id="GO:0007389">
    <property type="term" value="P:pattern specification process"/>
    <property type="evidence" value="ECO:0000318"/>
    <property type="project" value="GO_Central"/>
</dbReference>
<dbReference type="GO" id="GO:0015031">
    <property type="term" value="P:protein transport"/>
    <property type="evidence" value="ECO:0007669"/>
    <property type="project" value="UniProtKB-KW"/>
</dbReference>
<dbReference type="GO" id="GO:0016055">
    <property type="term" value="P:Wnt signaling pathway"/>
    <property type="evidence" value="ECO:0007669"/>
    <property type="project" value="UniProtKB-KW"/>
</dbReference>
<dbReference type="FunFam" id="1.25.10.10:FF:000761">
    <property type="entry name" value="Adenomatous polyposis coli protein-related protein 1"/>
    <property type="match status" value="1"/>
</dbReference>
<dbReference type="Gene3D" id="1.25.10.10">
    <property type="entry name" value="Leucine-rich Repeat Variant"/>
    <property type="match status" value="1"/>
</dbReference>
<dbReference type="InterPro" id="IPR026818">
    <property type="entry name" value="Apc_fam"/>
</dbReference>
<dbReference type="InterPro" id="IPR011989">
    <property type="entry name" value="ARM-like"/>
</dbReference>
<dbReference type="InterPro" id="IPR016024">
    <property type="entry name" value="ARM-type_fold"/>
</dbReference>
<dbReference type="PANTHER" id="PTHR12607">
    <property type="entry name" value="ADENOMATOUS POLYPOSIS COLI PROTEIN FAMILY"/>
    <property type="match status" value="1"/>
</dbReference>
<dbReference type="PANTHER" id="PTHR12607:SF12">
    <property type="entry name" value="APC-LIKE, ISOFORM A-RELATED"/>
    <property type="match status" value="1"/>
</dbReference>
<dbReference type="SUPFAM" id="SSF48371">
    <property type="entry name" value="ARM repeat"/>
    <property type="match status" value="1"/>
</dbReference>
<proteinExistence type="inferred from homology"/>
<comment type="function">
    <text evidence="1">Has a role in endoderm cell specification and pharyngeal development. Required for the migration of epithelial cells, organization of the anterior seam cells and ceh-13 expression during embryo morphogenesis. Prevents hyperactivation of the Wnt signaling pathway during endoderm development, probably by preventing hmp-2 nuclear translocation. During larval development, apr-1 is required for expression of lin-39 in P3-8.p. Shown to negatively regulate Wnt signaling in vulval precursor cells. Has a role in cell division by establishing the polarity of the mother cell which forms the asymmetries of the daughter nuclei. Thought to regulate export of wrm-1 from the nucleus possibly as part of a complex involving pry-1.</text>
</comment>
<comment type="subunit">
    <text evidence="1">Interacts (via N-terminus) with bar-1 and hmp-2; the interaction with hmp-2 is relatively weak. Interacts (via C-terminus) with pry-1 (via N-terminus). Probably associates with bar-1, gsk-3, pry-1 in a complex (By similarity).</text>
</comment>
<comment type="subcellular location">
    <subcellularLocation>
        <location evidence="1">Cell junction</location>
        <location evidence="1">Adherens junction</location>
    </subcellularLocation>
    <subcellularLocation>
        <location evidence="1">Cytoplasm</location>
    </subcellularLocation>
    <subcellularLocation>
        <location evidence="1">Nucleus</location>
    </subcellularLocation>
    <text evidence="1">Found in clusters near the ends of microtubules that extend into regions of actively migrating plasma membranes. Shuttles between the cytoplasm and nucleus (By similarity).</text>
</comment>
<comment type="similarity">
    <text evidence="2">Belongs to the adenomatous polyposis coli (APC) family.</text>
</comment>
<accession>A8X633</accession>